<name>LINES_HUMAN</name>
<evidence type="ECO:0000250" key="1">
    <source>
        <dbReference type="UniProtKB" id="Q3U1D0"/>
    </source>
</evidence>
<evidence type="ECO:0000269" key="2">
    <source>
    </source>
</evidence>
<evidence type="ECO:0000269" key="3">
    <source>
    </source>
</evidence>
<evidence type="ECO:0000269" key="4">
    <source>
    </source>
</evidence>
<evidence type="ECO:0000269" key="5">
    <source>
    </source>
</evidence>
<evidence type="ECO:0000269" key="6">
    <source>
    </source>
</evidence>
<evidence type="ECO:0000303" key="7">
    <source>
    </source>
</evidence>
<evidence type="ECO:0000305" key="8"/>
<evidence type="ECO:0000312" key="9">
    <source>
        <dbReference type="HGNC" id="HGNC:30922"/>
    </source>
</evidence>
<feature type="chain" id="PRO_0000317749" description="Protein Lines homolog 1">
    <location>
        <begin position="1"/>
        <end position="757"/>
    </location>
</feature>
<feature type="modified residue" description="Phosphoserine" evidence="1">
    <location>
        <position position="635"/>
    </location>
</feature>
<feature type="splice variant" id="VSP_031142" description="In isoform 2." evidence="7">
    <original>VDLQRFMSELLTFLKPHLQPSLQLHNPCK</original>
    <variation>GNSPNSFCMQCVIIYLSTVIHNYQISGLV</variation>
    <location>
        <begin position="408"/>
        <end position="436"/>
    </location>
</feature>
<feature type="splice variant" id="VSP_031143" description="In isoform 3." evidence="7">
    <original>VD</original>
    <variation>GA</variation>
    <location>
        <begin position="408"/>
        <end position="409"/>
    </location>
</feature>
<feature type="splice variant" id="VSP_031144" description="In isoform 3." evidence="7">
    <location>
        <begin position="410"/>
        <end position="757"/>
    </location>
</feature>
<feature type="splice variant" id="VSP_031145" description="In isoform 2." evidence="7">
    <location>
        <begin position="437"/>
        <end position="757"/>
    </location>
</feature>
<feature type="sequence variant" id="VAR_038668" description="In dbSNP:rs11247226." evidence="3">
    <original>I</original>
    <variation>V</variation>
    <location>
        <position position="29"/>
    </location>
</feature>
<feature type="sequence variant" id="VAR_078341" description="In MRT27; uncertain significance; dbSNP:rs1057519019." evidence="6">
    <original>E</original>
    <variation>K</variation>
    <location>
        <position position="313"/>
    </location>
</feature>
<feature type="sequence variant" id="VAR_038669" description="In dbSNP:rs34967129.">
    <original>A</original>
    <variation>V</variation>
    <location>
        <position position="331"/>
    </location>
</feature>
<feature type="sequence variant" id="VAR_038670" description="In dbSNP:rs12719734." evidence="2 3">
    <original>V</original>
    <variation>M</variation>
    <location>
        <position position="406"/>
    </location>
</feature>
<feature type="sequence variant" id="VAR_038671" description="In dbSNP:rs2411837.">
    <original>S</original>
    <variation>T</variation>
    <location>
        <position position="472"/>
    </location>
</feature>
<feature type="sequence variant" id="VAR_038672" description="In dbSNP:rs12915007.">
    <original>I</original>
    <variation>V</variation>
    <location>
        <position position="541"/>
    </location>
</feature>
<feature type="sequence variant" id="VAR_038673" description="In dbSNP:rs12157.">
    <original>E</original>
    <variation>D</variation>
    <location>
        <position position="641"/>
    </location>
</feature>
<feature type="sequence variant" id="VAR_038674" description="In dbSNP:rs8451.">
    <original>R</original>
    <variation>S</variation>
    <location>
        <position position="680"/>
    </location>
</feature>
<protein>
    <recommendedName>
        <fullName evidence="9">Protein Lines homolog 1</fullName>
    </recommendedName>
    <alternativeName>
        <fullName evidence="8">Wnt-signaling molecule Lines homolog 1</fullName>
    </alternativeName>
</protein>
<comment type="alternative products">
    <event type="alternative splicing"/>
    <isoform>
        <id>Q8NG48-1</id>
        <name>1</name>
        <sequence type="displayed"/>
    </isoform>
    <isoform>
        <id>Q8NG48-2</id>
        <name>2</name>
        <sequence type="described" ref="VSP_031142 VSP_031145"/>
    </isoform>
    <isoform>
        <id>Q8NG48-3</id>
        <name>3</name>
        <sequence type="described" ref="VSP_031143 VSP_031144"/>
    </isoform>
</comment>
<comment type="tissue specificity">
    <text evidence="2">Expressed in adult testis, prostate, prostate, spleen, thymus, skeletal muscle, fetal kidney and brain.</text>
</comment>
<comment type="disease" evidence="4 5 6">
    <disease id="DI-04059">
        <name>Intellectual developmental disorder, autosomal recessive 27</name>
        <acronym>MRT27</acronym>
        <description>A disorder characterized by significantly below average general intellectual functioning associated with impairments in adaptive behavior and manifested during the developmental period.</description>
        <dbReference type="MIM" id="614340"/>
    </disease>
    <text>The disease is caused by variants affecting the gene represented in this entry.</text>
</comment>
<comment type="similarity">
    <text evidence="8">Belongs to the protein lines family.</text>
</comment>
<reference key="1">
    <citation type="journal article" date="2002" name="Int. J. Mol. Med.">
        <title>Molecular cloning and characterization of human WINS1 and mouse Wins2, homologous to Drosophila segment polarity gene Lines (Lin).</title>
        <authorList>
            <person name="Katoh M."/>
        </authorList>
    </citation>
    <scope>NUCLEOTIDE SEQUENCE [MRNA] (ISOFORM 1)</scope>
    <scope>TISSUE SPECIFICITY</scope>
    <scope>VARIANT MET-406</scope>
</reference>
<reference key="2">
    <citation type="journal article" date="2004" name="Nat. Genet.">
        <title>Complete sequencing and characterization of 21,243 full-length human cDNAs.</title>
        <authorList>
            <person name="Ota T."/>
            <person name="Suzuki Y."/>
            <person name="Nishikawa T."/>
            <person name="Otsuki T."/>
            <person name="Sugiyama T."/>
            <person name="Irie R."/>
            <person name="Wakamatsu A."/>
            <person name="Hayashi K."/>
            <person name="Sato H."/>
            <person name="Nagai K."/>
            <person name="Kimura K."/>
            <person name="Makita H."/>
            <person name="Sekine M."/>
            <person name="Obayashi M."/>
            <person name="Nishi T."/>
            <person name="Shibahara T."/>
            <person name="Tanaka T."/>
            <person name="Ishii S."/>
            <person name="Yamamoto J."/>
            <person name="Saito K."/>
            <person name="Kawai Y."/>
            <person name="Isono Y."/>
            <person name="Nakamura Y."/>
            <person name="Nagahari K."/>
            <person name="Murakami K."/>
            <person name="Yasuda T."/>
            <person name="Iwayanagi T."/>
            <person name="Wagatsuma M."/>
            <person name="Shiratori A."/>
            <person name="Sudo H."/>
            <person name="Hosoiri T."/>
            <person name="Kaku Y."/>
            <person name="Kodaira H."/>
            <person name="Kondo H."/>
            <person name="Sugawara M."/>
            <person name="Takahashi M."/>
            <person name="Kanda K."/>
            <person name="Yokoi T."/>
            <person name="Furuya T."/>
            <person name="Kikkawa E."/>
            <person name="Omura Y."/>
            <person name="Abe K."/>
            <person name="Kamihara K."/>
            <person name="Katsuta N."/>
            <person name="Sato K."/>
            <person name="Tanikawa M."/>
            <person name="Yamazaki M."/>
            <person name="Ninomiya K."/>
            <person name="Ishibashi T."/>
            <person name="Yamashita H."/>
            <person name="Murakawa K."/>
            <person name="Fujimori K."/>
            <person name="Tanai H."/>
            <person name="Kimata M."/>
            <person name="Watanabe M."/>
            <person name="Hiraoka S."/>
            <person name="Chiba Y."/>
            <person name="Ishida S."/>
            <person name="Ono Y."/>
            <person name="Takiguchi S."/>
            <person name="Watanabe S."/>
            <person name="Yosida M."/>
            <person name="Hotuta T."/>
            <person name="Kusano J."/>
            <person name="Kanehori K."/>
            <person name="Takahashi-Fujii A."/>
            <person name="Hara H."/>
            <person name="Tanase T.-O."/>
            <person name="Nomura Y."/>
            <person name="Togiya S."/>
            <person name="Komai F."/>
            <person name="Hara R."/>
            <person name="Takeuchi K."/>
            <person name="Arita M."/>
            <person name="Imose N."/>
            <person name="Musashino K."/>
            <person name="Yuuki H."/>
            <person name="Oshima A."/>
            <person name="Sasaki N."/>
            <person name="Aotsuka S."/>
            <person name="Yoshikawa Y."/>
            <person name="Matsunawa H."/>
            <person name="Ichihara T."/>
            <person name="Shiohata N."/>
            <person name="Sano S."/>
            <person name="Moriya S."/>
            <person name="Momiyama H."/>
            <person name="Satoh N."/>
            <person name="Takami S."/>
            <person name="Terashima Y."/>
            <person name="Suzuki O."/>
            <person name="Nakagawa S."/>
            <person name="Senoh A."/>
            <person name="Mizoguchi H."/>
            <person name="Goto Y."/>
            <person name="Shimizu F."/>
            <person name="Wakebe H."/>
            <person name="Hishigaki H."/>
            <person name="Watanabe T."/>
            <person name="Sugiyama A."/>
            <person name="Takemoto M."/>
            <person name="Kawakami B."/>
            <person name="Yamazaki M."/>
            <person name="Watanabe K."/>
            <person name="Kumagai A."/>
            <person name="Itakura S."/>
            <person name="Fukuzumi Y."/>
            <person name="Fujimori Y."/>
            <person name="Komiyama M."/>
            <person name="Tashiro H."/>
            <person name="Tanigami A."/>
            <person name="Fujiwara T."/>
            <person name="Ono T."/>
            <person name="Yamada K."/>
            <person name="Fujii Y."/>
            <person name="Ozaki K."/>
            <person name="Hirao M."/>
            <person name="Ohmori Y."/>
            <person name="Kawabata A."/>
            <person name="Hikiji T."/>
            <person name="Kobatake N."/>
            <person name="Inagaki H."/>
            <person name="Ikema Y."/>
            <person name="Okamoto S."/>
            <person name="Okitani R."/>
            <person name="Kawakami T."/>
            <person name="Noguchi S."/>
            <person name="Itoh T."/>
            <person name="Shigeta K."/>
            <person name="Senba T."/>
            <person name="Matsumura K."/>
            <person name="Nakajima Y."/>
            <person name="Mizuno T."/>
            <person name="Morinaga M."/>
            <person name="Sasaki M."/>
            <person name="Togashi T."/>
            <person name="Oyama M."/>
            <person name="Hata H."/>
            <person name="Watanabe M."/>
            <person name="Komatsu T."/>
            <person name="Mizushima-Sugano J."/>
            <person name="Satoh T."/>
            <person name="Shirai Y."/>
            <person name="Takahashi Y."/>
            <person name="Nakagawa K."/>
            <person name="Okumura K."/>
            <person name="Nagase T."/>
            <person name="Nomura N."/>
            <person name="Kikuchi H."/>
            <person name="Masuho Y."/>
            <person name="Yamashita R."/>
            <person name="Nakai K."/>
            <person name="Yada T."/>
            <person name="Nakamura Y."/>
            <person name="Ohara O."/>
            <person name="Isogai T."/>
            <person name="Sugano S."/>
        </authorList>
    </citation>
    <scope>NUCLEOTIDE SEQUENCE [LARGE SCALE MRNA] (ISOFORMS 2 AND 3)</scope>
    <scope>VARIANTS VAL-29 AND MET-406</scope>
</reference>
<reference key="3">
    <citation type="journal article" date="2006" name="Nature">
        <title>Analysis of the DNA sequence and duplication history of human chromosome 15.</title>
        <authorList>
            <person name="Zody M.C."/>
            <person name="Garber M."/>
            <person name="Sharpe T."/>
            <person name="Young S.K."/>
            <person name="Rowen L."/>
            <person name="O'Neill K."/>
            <person name="Whittaker C.A."/>
            <person name="Kamal M."/>
            <person name="Chang J.L."/>
            <person name="Cuomo C.A."/>
            <person name="Dewar K."/>
            <person name="FitzGerald M.G."/>
            <person name="Kodira C.D."/>
            <person name="Madan A."/>
            <person name="Qin S."/>
            <person name="Yang X."/>
            <person name="Abbasi N."/>
            <person name="Abouelleil A."/>
            <person name="Arachchi H.M."/>
            <person name="Baradarani L."/>
            <person name="Birditt B."/>
            <person name="Bloom S."/>
            <person name="Bloom T."/>
            <person name="Borowsky M.L."/>
            <person name="Burke J."/>
            <person name="Butler J."/>
            <person name="Cook A."/>
            <person name="DeArellano K."/>
            <person name="DeCaprio D."/>
            <person name="Dorris L. III"/>
            <person name="Dors M."/>
            <person name="Eichler E.E."/>
            <person name="Engels R."/>
            <person name="Fahey J."/>
            <person name="Fleetwood P."/>
            <person name="Friedman C."/>
            <person name="Gearin G."/>
            <person name="Hall J.L."/>
            <person name="Hensley G."/>
            <person name="Johnson E."/>
            <person name="Jones C."/>
            <person name="Kamat A."/>
            <person name="Kaur A."/>
            <person name="Locke D.P."/>
            <person name="Madan A."/>
            <person name="Munson G."/>
            <person name="Jaffe D.B."/>
            <person name="Lui A."/>
            <person name="Macdonald P."/>
            <person name="Mauceli E."/>
            <person name="Naylor J.W."/>
            <person name="Nesbitt R."/>
            <person name="Nicol R."/>
            <person name="O'Leary S.B."/>
            <person name="Ratcliffe A."/>
            <person name="Rounsley S."/>
            <person name="She X."/>
            <person name="Sneddon K.M.B."/>
            <person name="Stewart S."/>
            <person name="Sougnez C."/>
            <person name="Stone S.M."/>
            <person name="Topham K."/>
            <person name="Vincent D."/>
            <person name="Wang S."/>
            <person name="Zimmer A.R."/>
            <person name="Birren B.W."/>
            <person name="Hood L."/>
            <person name="Lander E.S."/>
            <person name="Nusbaum C."/>
        </authorList>
    </citation>
    <scope>NUCLEOTIDE SEQUENCE [LARGE SCALE GENOMIC DNA]</scope>
</reference>
<reference key="4">
    <citation type="journal article" date="2011" name="Nature">
        <title>Deep sequencing reveals 50 novel genes for recessive cognitive disorders.</title>
        <authorList>
            <person name="Najmabadi H."/>
            <person name="Hu H."/>
            <person name="Garshasbi M."/>
            <person name="Zemojtel T."/>
            <person name="Abedini S.S."/>
            <person name="Chen W."/>
            <person name="Hosseini M."/>
            <person name="Behjati F."/>
            <person name="Haas S."/>
            <person name="Jamali P."/>
            <person name="Zecha A."/>
            <person name="Mohseni M."/>
            <person name="Puettmann L."/>
            <person name="Vahid L.N."/>
            <person name="Jensen C."/>
            <person name="Moheb L.A."/>
            <person name="Bienek M."/>
            <person name="Larti F."/>
            <person name="Mueller I."/>
            <person name="Weissmann R."/>
            <person name="Darvish H."/>
            <person name="Wrogemann K."/>
            <person name="Hadavi V."/>
            <person name="Lipkowitz B."/>
            <person name="Esmaeeli-Nieh S."/>
            <person name="Wieczorek D."/>
            <person name="Kariminejad R."/>
            <person name="Firouzabadi S.G."/>
            <person name="Cohen M."/>
            <person name="Fattahi Z."/>
            <person name="Rost I."/>
            <person name="Mojahedi F."/>
            <person name="Hertzberg C."/>
            <person name="Dehghan A."/>
            <person name="Rajab A."/>
            <person name="Banavandi M.J."/>
            <person name="Hoffer J."/>
            <person name="Falah M."/>
            <person name="Musante L."/>
            <person name="Kalscheuer V."/>
            <person name="Ullmann R."/>
            <person name="Kuss A.W."/>
            <person name="Tzschach A."/>
            <person name="Kahrizi K."/>
            <person name="Ropers H.H."/>
        </authorList>
    </citation>
    <scope>INVOLVEMENT IN MRT27</scope>
</reference>
<reference key="5">
    <citation type="journal article" date="2013" name="Orphanet J. Rare Dis.">
        <title>LINS, a modulator of the WNT signaling pathway, is involved in human cognition.</title>
        <authorList>
            <person name="Akawi N.A."/>
            <person name="Al-Jasmi F."/>
            <person name="Al-Shamsi A.M."/>
            <person name="Ali B.R."/>
            <person name="Al-Gazali L."/>
        </authorList>
    </citation>
    <scope>INVOLVEMENT IN MRT27</scope>
</reference>
<reference key="6">
    <citation type="journal article" date="2017" name="Am. J. Med. Genet. A">
        <title>Novel LINS1 missense mutation in a family with non-syndromic intellectual disability.</title>
        <authorList>
            <person name="Sheth J."/>
            <person name="Ranjan G."/>
            <person name="Shah K."/>
            <person name="Bhavsar R."/>
            <person name="Sheth F."/>
        </authorList>
    </citation>
    <scope>VARIANT MRT27 LYS-313</scope>
</reference>
<keyword id="KW-0025">Alternative splicing</keyword>
<keyword id="KW-0225">Disease variant</keyword>
<keyword id="KW-0991">Intellectual disability</keyword>
<keyword id="KW-0597">Phosphoprotein</keyword>
<keyword id="KW-1267">Proteomics identification</keyword>
<keyword id="KW-1185">Reference proteome</keyword>
<organism>
    <name type="scientific">Homo sapiens</name>
    <name type="common">Human</name>
    <dbReference type="NCBI Taxonomy" id="9606"/>
    <lineage>
        <taxon>Eukaryota</taxon>
        <taxon>Metazoa</taxon>
        <taxon>Chordata</taxon>
        <taxon>Craniata</taxon>
        <taxon>Vertebrata</taxon>
        <taxon>Euteleostomi</taxon>
        <taxon>Mammalia</taxon>
        <taxon>Eutheria</taxon>
        <taxon>Euarchontoglires</taxon>
        <taxon>Primates</taxon>
        <taxon>Haplorrhini</taxon>
        <taxon>Catarrhini</taxon>
        <taxon>Hominidae</taxon>
        <taxon>Homo</taxon>
    </lineage>
</organism>
<accession>Q8NG48</accession>
<accession>Q96FW2</accession>
<accession>Q9NVQ3</accession>
<dbReference type="EMBL" id="AB083157">
    <property type="protein sequence ID" value="BAB93864.1"/>
    <property type="molecule type" value="mRNA"/>
</dbReference>
<dbReference type="EMBL" id="AK001445">
    <property type="protein sequence ID" value="BAA91696.1"/>
    <property type="molecule type" value="mRNA"/>
</dbReference>
<dbReference type="EMBL" id="AK292972">
    <property type="protein sequence ID" value="BAF85661.1"/>
    <property type="molecule type" value="mRNA"/>
</dbReference>
<dbReference type="EMBL" id="AC027020">
    <property type="status" value="NOT_ANNOTATED_CDS"/>
    <property type="molecule type" value="Genomic_DNA"/>
</dbReference>
<dbReference type="EMBL" id="AC090695">
    <property type="status" value="NOT_ANNOTATED_CDS"/>
    <property type="molecule type" value="Genomic_DNA"/>
</dbReference>
<dbReference type="CCDS" id="CCDS10385.1">
    <molecule id="Q8NG48-1"/>
</dbReference>
<dbReference type="RefSeq" id="NP_001035706.2">
    <molecule id="Q8NG48-1"/>
    <property type="nucleotide sequence ID" value="NM_001040616.3"/>
</dbReference>
<dbReference type="RefSeq" id="XP_005254998.1">
    <molecule id="Q8NG48-1"/>
    <property type="nucleotide sequence ID" value="XM_005254941.3"/>
</dbReference>
<dbReference type="RefSeq" id="XP_024305748.1">
    <molecule id="Q8NG48-1"/>
    <property type="nucleotide sequence ID" value="XM_024449980.2"/>
</dbReference>
<dbReference type="RefSeq" id="XP_047288742.1">
    <molecule id="Q8NG48-3"/>
    <property type="nucleotide sequence ID" value="XM_047432786.1"/>
</dbReference>
<dbReference type="RefSeq" id="XP_047288743.1">
    <molecule id="Q8NG48-3"/>
    <property type="nucleotide sequence ID" value="XM_047432787.1"/>
</dbReference>
<dbReference type="BioGRID" id="120479">
    <property type="interactions" value="9"/>
</dbReference>
<dbReference type="FunCoup" id="Q8NG48">
    <property type="interactions" value="981"/>
</dbReference>
<dbReference type="IntAct" id="Q8NG48">
    <property type="interactions" value="4"/>
</dbReference>
<dbReference type="STRING" id="9606.ENSP00000318423"/>
<dbReference type="iPTMnet" id="Q8NG48"/>
<dbReference type="PhosphoSitePlus" id="Q8NG48"/>
<dbReference type="BioMuta" id="LINS1"/>
<dbReference type="DMDM" id="317373380"/>
<dbReference type="jPOST" id="Q8NG48"/>
<dbReference type="MassIVE" id="Q8NG48"/>
<dbReference type="PaxDb" id="9606-ENSP00000318423"/>
<dbReference type="PeptideAtlas" id="Q8NG48"/>
<dbReference type="ProteomicsDB" id="73423">
    <molecule id="Q8NG48-1"/>
</dbReference>
<dbReference type="ProteomicsDB" id="73424">
    <molecule id="Q8NG48-2"/>
</dbReference>
<dbReference type="ProteomicsDB" id="73425">
    <molecule id="Q8NG48-3"/>
</dbReference>
<dbReference type="Antibodypedia" id="51579">
    <property type="antibodies" value="71 antibodies from 15 providers"/>
</dbReference>
<dbReference type="DNASU" id="55180"/>
<dbReference type="Ensembl" id="ENST00000314742.13">
    <molecule id="Q8NG48-1"/>
    <property type="protein sequence ID" value="ENSP00000318423.8"/>
    <property type="gene ID" value="ENSG00000140471.17"/>
</dbReference>
<dbReference type="Ensembl" id="ENST00000561308.5">
    <molecule id="Q8NG48-2"/>
    <property type="protein sequence ID" value="ENSP00000454200.1"/>
    <property type="gene ID" value="ENSG00000140471.17"/>
</dbReference>
<dbReference type="GeneID" id="55180"/>
<dbReference type="KEGG" id="hsa:55180"/>
<dbReference type="MANE-Select" id="ENST00000314742.13">
    <property type="protein sequence ID" value="ENSP00000318423.8"/>
    <property type="RefSeq nucleotide sequence ID" value="NM_001040616.3"/>
    <property type="RefSeq protein sequence ID" value="NP_001035706.2"/>
</dbReference>
<dbReference type="UCSC" id="uc002bwg.4">
    <molecule id="Q8NG48-1"/>
    <property type="organism name" value="human"/>
</dbReference>
<dbReference type="AGR" id="HGNC:30922"/>
<dbReference type="CTD" id="55180"/>
<dbReference type="DisGeNET" id="55180"/>
<dbReference type="GeneCards" id="LINS1"/>
<dbReference type="HGNC" id="HGNC:30922">
    <property type="gene designation" value="LINS1"/>
</dbReference>
<dbReference type="HPA" id="ENSG00000140471">
    <property type="expression patterns" value="Low tissue specificity"/>
</dbReference>
<dbReference type="MalaCards" id="LINS1"/>
<dbReference type="MIM" id="610350">
    <property type="type" value="gene"/>
</dbReference>
<dbReference type="MIM" id="614340">
    <property type="type" value="phenotype"/>
</dbReference>
<dbReference type="neXtProt" id="NX_Q8NG48"/>
<dbReference type="OpenTargets" id="ENSG00000140471"/>
<dbReference type="Orphanet" id="88616">
    <property type="disease" value="Autosomal recessive non-syndromic intellectual disability"/>
</dbReference>
<dbReference type="PharmGKB" id="PA142671544"/>
<dbReference type="VEuPathDB" id="HostDB:ENSG00000140471"/>
<dbReference type="eggNOG" id="ENOG502QT6F">
    <property type="taxonomic scope" value="Eukaryota"/>
</dbReference>
<dbReference type="GeneTree" id="ENSGT00390000001790"/>
<dbReference type="HOGENOM" id="CLU_026992_0_0_1"/>
<dbReference type="InParanoid" id="Q8NG48"/>
<dbReference type="OMA" id="FYRIVKC"/>
<dbReference type="OrthoDB" id="8251209at2759"/>
<dbReference type="PAN-GO" id="Q8NG48">
    <property type="GO annotations" value="0 GO annotations based on evolutionary models"/>
</dbReference>
<dbReference type="PhylomeDB" id="Q8NG48"/>
<dbReference type="TreeFam" id="TF332955"/>
<dbReference type="PathwayCommons" id="Q8NG48"/>
<dbReference type="SignaLink" id="Q8NG48"/>
<dbReference type="BioGRID-ORCS" id="55180">
    <property type="hits" value="22 hits in 1144 CRISPR screens"/>
</dbReference>
<dbReference type="ChiTaRS" id="LINS1">
    <property type="organism name" value="human"/>
</dbReference>
<dbReference type="GenomeRNAi" id="55180"/>
<dbReference type="Pharos" id="Q8NG48">
    <property type="development level" value="Tbio"/>
</dbReference>
<dbReference type="PRO" id="PR:Q8NG48"/>
<dbReference type="Proteomes" id="UP000005640">
    <property type="component" value="Chromosome 15"/>
</dbReference>
<dbReference type="RNAct" id="Q8NG48">
    <property type="molecule type" value="protein"/>
</dbReference>
<dbReference type="Bgee" id="ENSG00000140471">
    <property type="expression patterns" value="Expressed in epithelium of nasopharynx and 173 other cell types or tissues"/>
</dbReference>
<dbReference type="ExpressionAtlas" id="Q8NG48">
    <property type="expression patterns" value="baseline and differential"/>
</dbReference>
<dbReference type="GO" id="GO:0050890">
    <property type="term" value="P:cognition"/>
    <property type="evidence" value="ECO:0000315"/>
    <property type="project" value="HGNC"/>
</dbReference>
<dbReference type="InterPro" id="IPR029415">
    <property type="entry name" value="Lines_C"/>
</dbReference>
<dbReference type="InterPro" id="IPR032794">
    <property type="entry name" value="LINES_N"/>
</dbReference>
<dbReference type="InterPro" id="IPR024875">
    <property type="entry name" value="Protein_Lines"/>
</dbReference>
<dbReference type="PANTHER" id="PTHR16057:SF1">
    <property type="entry name" value="PROTEIN LINES HOMOLOG 1"/>
    <property type="match status" value="1"/>
</dbReference>
<dbReference type="PANTHER" id="PTHR16057">
    <property type="entry name" value="WINS1, 2 PROTEIN"/>
    <property type="match status" value="1"/>
</dbReference>
<dbReference type="Pfam" id="PF14695">
    <property type="entry name" value="LINES_C"/>
    <property type="match status" value="1"/>
</dbReference>
<dbReference type="Pfam" id="PF14694">
    <property type="entry name" value="LINES_N"/>
    <property type="match status" value="1"/>
</dbReference>
<proteinExistence type="evidence at protein level"/>
<sequence>MKVFCEVLEELYKKVLLGATLENDSHDYIFYLNPAVSDQDCSTATSLEWANTCGIQGRHQPISVGVAPIAVAPVCLKTNSQMSGSREVMLLQLTVIKVMTTRILSVKTEFHAKEQYRDVIKILLESAKVDSKLICMFQNSDKLLSHMAAQCLALLLYFQLREKITLSNSWIAFCQKNLSEYSESNKAIYCLWTLTAIIKEIFKDSCSQKTEILKQFLTHFDTIFEVFYNSLFSQHFENCRDTSKIVNILMCFLDLLELLIASRIHLKLHFTCQRILFLKPSCMLEVITWPIQAFVKRKVIIFLKKCLLCKVGEDLCRGSVPALMPPDHHVAVDMLALANAVLQAVNSGLLKTLSVYEKHSFFGGDEVQPECELITSPDHVILRAASLVIMKSLEIKFQNYSSASEVKVDLQRFMSELLTFLKPHLQPSLQLHNPCKWLSRVFIEQDDDMLEAAKASLGIYLTLTRGCEATESLTQGKEMWDHHTHENGYNPHCIFLFFLKNIGFDSTVLLDFLISSETCFLEYFVRYLKLLQKDWDNFFTICNNFDATESKYDISICGCVPSLVQDQSSNQTIPHRLTAPHSHRDVCARHSWASDAPSEPLKAVMSKGAHTMCASSLSSPRASQSLVDYDSSDDSDVESTEQCLANSKQTSLHQQATKEIQDAAGTSRDKKEFSLEPPSRPLVLKEFDTAFSFDCEVAPNDVVSEVGIFYRIVKCFQELQDAICRLQKKNLFPYNPTALLKLLKYIEVISNKTMNTL</sequence>
<gene>
    <name evidence="9" type="primary">LINS1</name>
    <name evidence="8" type="synonym">LINS</name>
    <name evidence="9" type="synonym">WINS1</name>
</gene>